<dbReference type="EC" id="2.7.4.9"/>
<dbReference type="EMBL" id="AF095689">
    <property type="protein sequence ID" value="AAF34060.1"/>
    <property type="molecule type" value="Genomic_DNA"/>
</dbReference>
<dbReference type="SMR" id="Q77TG7"/>
<dbReference type="UniPathway" id="UPA00575"/>
<dbReference type="Proteomes" id="UP000163220">
    <property type="component" value="Genome"/>
</dbReference>
<dbReference type="GO" id="GO:0005524">
    <property type="term" value="F:ATP binding"/>
    <property type="evidence" value="ECO:0007669"/>
    <property type="project" value="UniProtKB-KW"/>
</dbReference>
<dbReference type="GO" id="GO:0004798">
    <property type="term" value="F:dTMP kinase activity"/>
    <property type="evidence" value="ECO:0007669"/>
    <property type="project" value="UniProtKB-EC"/>
</dbReference>
<dbReference type="GO" id="GO:0004550">
    <property type="term" value="F:nucleoside diphosphate kinase activity"/>
    <property type="evidence" value="ECO:0007669"/>
    <property type="project" value="TreeGrafter"/>
</dbReference>
<dbReference type="GO" id="GO:0006233">
    <property type="term" value="P:dTDP biosynthetic process"/>
    <property type="evidence" value="ECO:0007669"/>
    <property type="project" value="InterPro"/>
</dbReference>
<dbReference type="GO" id="GO:0006235">
    <property type="term" value="P:dTTP biosynthetic process"/>
    <property type="evidence" value="ECO:0007669"/>
    <property type="project" value="UniProtKB-UniPathway"/>
</dbReference>
<dbReference type="GO" id="GO:0006227">
    <property type="term" value="P:dUDP biosynthetic process"/>
    <property type="evidence" value="ECO:0007669"/>
    <property type="project" value="TreeGrafter"/>
</dbReference>
<dbReference type="Gene3D" id="3.40.50.300">
    <property type="entry name" value="P-loop containing nucleotide triphosphate hydrolases"/>
    <property type="match status" value="1"/>
</dbReference>
<dbReference type="InterPro" id="IPR027417">
    <property type="entry name" value="P-loop_NTPase"/>
</dbReference>
<dbReference type="InterPro" id="IPR039430">
    <property type="entry name" value="Thymidylate_kin-like_dom"/>
</dbReference>
<dbReference type="InterPro" id="IPR018095">
    <property type="entry name" value="Thymidylate_kin_CS"/>
</dbReference>
<dbReference type="InterPro" id="IPR018094">
    <property type="entry name" value="Thymidylate_kinase"/>
</dbReference>
<dbReference type="NCBIfam" id="TIGR00041">
    <property type="entry name" value="DTMP_kinase"/>
    <property type="match status" value="1"/>
</dbReference>
<dbReference type="PANTHER" id="PTHR10344">
    <property type="entry name" value="THYMIDYLATE KINASE"/>
    <property type="match status" value="1"/>
</dbReference>
<dbReference type="PANTHER" id="PTHR10344:SF1">
    <property type="entry name" value="THYMIDYLATE KINASE"/>
    <property type="match status" value="1"/>
</dbReference>
<dbReference type="Pfam" id="PF02223">
    <property type="entry name" value="Thymidylate_kin"/>
    <property type="match status" value="1"/>
</dbReference>
<dbReference type="SUPFAM" id="SSF52540">
    <property type="entry name" value="P-loop containing nucleoside triphosphate hydrolases"/>
    <property type="match status" value="1"/>
</dbReference>
<dbReference type="PROSITE" id="PS01331">
    <property type="entry name" value="THYMIDYLATE_KINASE"/>
    <property type="match status" value="1"/>
</dbReference>
<organismHost>
    <name type="scientific">Homo sapiens</name>
    <name type="common">Human</name>
    <dbReference type="NCBI Taxonomy" id="9606"/>
</organismHost>
<protein>
    <recommendedName>
        <fullName>Thymidylate kinase</fullName>
        <ecNumber>2.7.4.9</ecNumber>
    </recommendedName>
    <alternativeName>
        <fullName>dTMP kinase</fullName>
    </alternativeName>
</protein>
<keyword id="KW-0067">ATP-binding</keyword>
<keyword id="KW-0418">Kinase</keyword>
<keyword id="KW-0545">Nucleotide biosynthesis</keyword>
<keyword id="KW-0547">Nucleotide-binding</keyword>
<keyword id="KW-0808">Transferase</keyword>
<proteinExistence type="inferred from homology"/>
<reference key="1">
    <citation type="submission" date="1998-09" db="EMBL/GenBank/DDBJ databases">
        <title>Complete genomic sequence of vaccinia virus (Tian Tan strain).</title>
        <authorList>
            <person name="Jin Q."/>
            <person name="Hou Y.D."/>
            <person name="Cheng N.H."/>
            <person name="Yao E.M."/>
            <person name="Cheng S.X."/>
            <person name="Yang X.K."/>
            <person name="Jing D.Y."/>
            <person name="Yu W.H."/>
            <person name="Yuan J.S."/>
            <person name="Ma X.J."/>
        </authorList>
    </citation>
    <scope>NUCLEOTIDE SEQUENCE [LARGE SCALE GENOMIC DNA]</scope>
</reference>
<evidence type="ECO:0000305" key="1"/>
<gene>
    <name type="primary">TMK</name>
    <name type="ORF">TA59R</name>
</gene>
<comment type="catalytic activity">
    <reaction>
        <text>dTMP + ATP = dTDP + ADP</text>
        <dbReference type="Rhea" id="RHEA:13517"/>
        <dbReference type="ChEBI" id="CHEBI:30616"/>
        <dbReference type="ChEBI" id="CHEBI:58369"/>
        <dbReference type="ChEBI" id="CHEBI:63528"/>
        <dbReference type="ChEBI" id="CHEBI:456216"/>
        <dbReference type="EC" id="2.7.4.9"/>
    </reaction>
</comment>
<comment type="pathway">
    <text>Pyrimidine metabolism; dTTP biosynthesis.</text>
</comment>
<comment type="similarity">
    <text evidence="1">Belongs to the thymidylate kinase family.</text>
</comment>
<sequence>MSRGALIVFEGLDKSGKTTQCMNIMESIPANTIKYLNFPQRSTVTGKMIDDYLTRKKTYNDHIVNLLFCANRWEFASFIQEQLEQGITLIVDRYAFSGVAYAAAKGASMTLSKSYESGLPKPDLVIFLESGSKEINRNVGEEIYEDVTFQQKVLQEYKKMIEEGDIHWQIISSEFEEDVKKELIKNIVIEAIHTVTGPVGQLWM</sequence>
<accession>Q77TG7</accession>
<name>KTHY_VACCT</name>
<feature type="chain" id="PRO_0000155218" description="Thymidylate kinase">
    <location>
        <begin position="1"/>
        <end position="204"/>
    </location>
</feature>
<feature type="binding site" evidence="1">
    <location>
        <begin position="11"/>
        <end position="18"/>
    </location>
    <ligand>
        <name>ATP</name>
        <dbReference type="ChEBI" id="CHEBI:30616"/>
    </ligand>
</feature>
<organism>
    <name type="scientific">Vaccinia virus (strain Tian Tan)</name>
    <name type="common">VACV</name>
    <dbReference type="NCBI Taxonomy" id="10253"/>
    <lineage>
        <taxon>Viruses</taxon>
        <taxon>Varidnaviria</taxon>
        <taxon>Bamfordvirae</taxon>
        <taxon>Nucleocytoviricota</taxon>
        <taxon>Pokkesviricetes</taxon>
        <taxon>Chitovirales</taxon>
        <taxon>Poxviridae</taxon>
        <taxon>Chordopoxvirinae</taxon>
        <taxon>Orthopoxvirus</taxon>
        <taxon>Vaccinia virus</taxon>
    </lineage>
</organism>